<sequence>MFDVTLLILLGLAALGFISHNTTVAVSILVLIIVRVTPLSTFFPWIEKQGLSIGIIILTIGVMAPIASGTLPPSTLIHSFLNWKSLVAIAVGVIVSWLGGRGVTLMGSQPQLVAGLLVGTVLGVALFRGVPVGPLIAAGLVSLIVGKQ</sequence>
<name>YEAL_ECOLI</name>
<reference key="1">
    <citation type="journal article" date="1996" name="DNA Res.">
        <title>A 460-kb DNA sequence of the Escherichia coli K-12 genome corresponding to the 40.1-50.0 min region on the linkage map.</title>
        <authorList>
            <person name="Itoh T."/>
            <person name="Aiba H."/>
            <person name="Baba T."/>
            <person name="Fujita K."/>
            <person name="Hayashi K."/>
            <person name="Inada T."/>
            <person name="Isono K."/>
            <person name="Kasai H."/>
            <person name="Kimura S."/>
            <person name="Kitakawa M."/>
            <person name="Kitagawa M."/>
            <person name="Makino K."/>
            <person name="Miki T."/>
            <person name="Mizobuchi K."/>
            <person name="Mori H."/>
            <person name="Mori T."/>
            <person name="Motomura K."/>
            <person name="Nakade S."/>
            <person name="Nakamura Y."/>
            <person name="Nashimoto H."/>
            <person name="Nishio Y."/>
            <person name="Oshima T."/>
            <person name="Saito N."/>
            <person name="Sampei G."/>
            <person name="Seki Y."/>
            <person name="Sivasundaram S."/>
            <person name="Tagami H."/>
            <person name="Takeda J."/>
            <person name="Takemoto K."/>
            <person name="Wada C."/>
            <person name="Yamamoto Y."/>
            <person name="Horiuchi T."/>
        </authorList>
    </citation>
    <scope>NUCLEOTIDE SEQUENCE [LARGE SCALE GENOMIC DNA]</scope>
    <source>
        <strain>K12 / W3110 / ATCC 27325 / DSM 5911</strain>
    </source>
</reference>
<reference key="2">
    <citation type="journal article" date="1997" name="Science">
        <title>The complete genome sequence of Escherichia coli K-12.</title>
        <authorList>
            <person name="Blattner F.R."/>
            <person name="Plunkett G. III"/>
            <person name="Bloch C.A."/>
            <person name="Perna N.T."/>
            <person name="Burland V."/>
            <person name="Riley M."/>
            <person name="Collado-Vides J."/>
            <person name="Glasner J.D."/>
            <person name="Rode C.K."/>
            <person name="Mayhew G.F."/>
            <person name="Gregor J."/>
            <person name="Davis N.W."/>
            <person name="Kirkpatrick H.A."/>
            <person name="Goeden M.A."/>
            <person name="Rose D.J."/>
            <person name="Mau B."/>
            <person name="Shao Y."/>
        </authorList>
    </citation>
    <scope>NUCLEOTIDE SEQUENCE [LARGE SCALE GENOMIC DNA]</scope>
    <source>
        <strain>K12 / MG1655 / ATCC 47076</strain>
    </source>
</reference>
<reference key="3">
    <citation type="journal article" date="2006" name="Mol. Syst. Biol.">
        <title>Highly accurate genome sequences of Escherichia coli K-12 strains MG1655 and W3110.</title>
        <authorList>
            <person name="Hayashi K."/>
            <person name="Morooka N."/>
            <person name="Yamamoto Y."/>
            <person name="Fujita K."/>
            <person name="Isono K."/>
            <person name="Choi S."/>
            <person name="Ohtsubo E."/>
            <person name="Baba T."/>
            <person name="Wanner B.L."/>
            <person name="Mori H."/>
            <person name="Horiuchi T."/>
        </authorList>
    </citation>
    <scope>NUCLEOTIDE SEQUENCE [LARGE SCALE GENOMIC DNA]</scope>
    <source>
        <strain>K12 / W3110 / ATCC 27325 / DSM 5911</strain>
    </source>
</reference>
<evidence type="ECO:0000255" key="1">
    <source>
        <dbReference type="HAMAP-Rule" id="MF_01874"/>
    </source>
</evidence>
<organism>
    <name type="scientific">Escherichia coli (strain K12)</name>
    <dbReference type="NCBI Taxonomy" id="83333"/>
    <lineage>
        <taxon>Bacteria</taxon>
        <taxon>Pseudomonadati</taxon>
        <taxon>Pseudomonadota</taxon>
        <taxon>Gammaproteobacteria</taxon>
        <taxon>Enterobacterales</taxon>
        <taxon>Enterobacteriaceae</taxon>
        <taxon>Escherichia</taxon>
    </lineage>
</organism>
<feature type="chain" id="PRO_0000169019" description="UPF0756 membrane protein YeaL">
    <location>
        <begin position="1"/>
        <end position="148"/>
    </location>
</feature>
<feature type="transmembrane region" description="Helical" evidence="1">
    <location>
        <begin position="14"/>
        <end position="34"/>
    </location>
</feature>
<feature type="transmembrane region" description="Helical" evidence="1">
    <location>
        <begin position="51"/>
        <end position="71"/>
    </location>
</feature>
<feature type="transmembrane region" description="Helical" evidence="1">
    <location>
        <begin position="86"/>
        <end position="106"/>
    </location>
</feature>
<feature type="transmembrane region" description="Helical" evidence="1">
    <location>
        <begin position="121"/>
        <end position="141"/>
    </location>
</feature>
<comment type="subcellular location">
    <subcellularLocation>
        <location evidence="1">Cell membrane</location>
        <topology evidence="1">Multi-pass membrane protein</topology>
    </subcellularLocation>
</comment>
<comment type="similarity">
    <text evidence="1">Belongs to the UPF0756 family.</text>
</comment>
<accession>P0ACY6</accession>
<accession>O07965</accession>
<accession>O07967</accession>
<accession>P76240</accession>
<gene>
    <name evidence="1" type="primary">yeaL</name>
    <name type="ordered locus">b1789</name>
    <name type="ordered locus">JW1778</name>
</gene>
<protein>
    <recommendedName>
        <fullName evidence="1">UPF0756 membrane protein YeaL</fullName>
    </recommendedName>
</protein>
<keyword id="KW-1003">Cell membrane</keyword>
<keyword id="KW-0472">Membrane</keyword>
<keyword id="KW-1185">Reference proteome</keyword>
<keyword id="KW-0812">Transmembrane</keyword>
<keyword id="KW-1133">Transmembrane helix</keyword>
<proteinExistence type="inferred from homology"/>
<dbReference type="EMBL" id="U00096">
    <property type="protein sequence ID" value="AAC74859.1"/>
    <property type="molecule type" value="Genomic_DNA"/>
</dbReference>
<dbReference type="EMBL" id="AP009048">
    <property type="protein sequence ID" value="BAA15588.1"/>
    <property type="molecule type" value="Genomic_DNA"/>
</dbReference>
<dbReference type="PIR" id="E64939">
    <property type="entry name" value="E64939"/>
</dbReference>
<dbReference type="RefSeq" id="NP_416303.1">
    <property type="nucleotide sequence ID" value="NC_000913.3"/>
</dbReference>
<dbReference type="RefSeq" id="WP_000460707.1">
    <property type="nucleotide sequence ID" value="NZ_STEB01000009.1"/>
</dbReference>
<dbReference type="BioGRID" id="4260326">
    <property type="interactions" value="14"/>
</dbReference>
<dbReference type="FunCoup" id="P0ACY6">
    <property type="interactions" value="11"/>
</dbReference>
<dbReference type="STRING" id="511145.b1789"/>
<dbReference type="PaxDb" id="511145-b1789"/>
<dbReference type="EnsemblBacteria" id="AAC74859">
    <property type="protein sequence ID" value="AAC74859"/>
    <property type="gene ID" value="b1789"/>
</dbReference>
<dbReference type="GeneID" id="946307"/>
<dbReference type="KEGG" id="ecj:JW1778"/>
<dbReference type="KEGG" id="eco:b1789"/>
<dbReference type="KEGG" id="ecoc:C3026_10200"/>
<dbReference type="PATRIC" id="fig|1411691.4.peg.466"/>
<dbReference type="EchoBASE" id="EB3271"/>
<dbReference type="eggNOG" id="COG2707">
    <property type="taxonomic scope" value="Bacteria"/>
</dbReference>
<dbReference type="HOGENOM" id="CLU_125889_0_0_6"/>
<dbReference type="InParanoid" id="P0ACY6"/>
<dbReference type="OMA" id="SPAGWIA"/>
<dbReference type="OrthoDB" id="80306at2"/>
<dbReference type="PhylomeDB" id="P0ACY6"/>
<dbReference type="BioCyc" id="EcoCyc:G6975-MONOMER"/>
<dbReference type="PRO" id="PR:P0ACY6"/>
<dbReference type="Proteomes" id="UP000000625">
    <property type="component" value="Chromosome"/>
</dbReference>
<dbReference type="GO" id="GO:0005886">
    <property type="term" value="C:plasma membrane"/>
    <property type="evidence" value="ECO:0000314"/>
    <property type="project" value="EcoCyc"/>
</dbReference>
<dbReference type="HAMAP" id="MF_01874">
    <property type="entry name" value="UPF0756"/>
    <property type="match status" value="1"/>
</dbReference>
<dbReference type="InterPro" id="IPR007382">
    <property type="entry name" value="UPF0756_TM"/>
</dbReference>
<dbReference type="PANTHER" id="PTHR38452">
    <property type="entry name" value="UPF0756 MEMBRANE PROTEIN YEAL"/>
    <property type="match status" value="1"/>
</dbReference>
<dbReference type="PANTHER" id="PTHR38452:SF1">
    <property type="entry name" value="UPF0756 MEMBRANE PROTEIN YEAL"/>
    <property type="match status" value="1"/>
</dbReference>
<dbReference type="Pfam" id="PF04284">
    <property type="entry name" value="DUF441"/>
    <property type="match status" value="1"/>
</dbReference>